<comment type="function">
    <text evidence="1">One of several proteins that assist in the late maturation steps of the functional core of the 30S ribosomal subunit. Helps release RbfA from mature subunits. May play a role in the assembly of ribosomal proteins into the subunit. Circularly permuted GTPase that catalyzes slow GTP hydrolysis, GTPase activity is stimulated by the 30S ribosomal subunit.</text>
</comment>
<comment type="cofactor">
    <cofactor evidence="1">
        <name>Zn(2+)</name>
        <dbReference type="ChEBI" id="CHEBI:29105"/>
    </cofactor>
    <text evidence="1">Binds 1 zinc ion per subunit.</text>
</comment>
<comment type="subunit">
    <text evidence="1">Monomer. Associates with 30S ribosomal subunit, binds 16S rRNA.</text>
</comment>
<comment type="subcellular location">
    <subcellularLocation>
        <location evidence="1">Cytoplasm</location>
    </subcellularLocation>
</comment>
<comment type="similarity">
    <text evidence="1">Belongs to the TRAFAC class YlqF/YawG GTPase family. RsgA subfamily.</text>
</comment>
<evidence type="ECO:0000255" key="1">
    <source>
        <dbReference type="HAMAP-Rule" id="MF_01820"/>
    </source>
</evidence>
<evidence type="ECO:0000255" key="2">
    <source>
        <dbReference type="PROSITE-ProRule" id="PRU01058"/>
    </source>
</evidence>
<sequence>MAKRHLTRRQSWRIEKIQEERAARAARRESRAVDELEGGDLGPEQTGQVIAHFGVQVEVESADGQVSRCHLRANLPALVTGDQVVWRAGNQGIGVIVAQLPRRSELCRPDMRGLLKPVAANVDRIVIVFAPRPEPHANLIDRYLIAAEHAGIQPLLLLNKADLVDESNAEGIDALLNVYRTLGYPLIEVSAFNGLAMDELRGALDGHVSVFVGQSGVGKSSLVNALLPGVDTRVGDLSTVTGKGTHTTTTARLFHFPGGGDLIDSPGIREFGLGHVSRDDVEAGFIEFRDLLGHCRFRDCKHDREPGCALLQALEDGRIMPQRMASYRHILASMPETDY</sequence>
<organism>
    <name type="scientific">Pseudomonas aeruginosa (strain LESB58)</name>
    <dbReference type="NCBI Taxonomy" id="557722"/>
    <lineage>
        <taxon>Bacteria</taxon>
        <taxon>Pseudomonadati</taxon>
        <taxon>Pseudomonadota</taxon>
        <taxon>Gammaproteobacteria</taxon>
        <taxon>Pseudomonadales</taxon>
        <taxon>Pseudomonadaceae</taxon>
        <taxon>Pseudomonas</taxon>
    </lineage>
</organism>
<proteinExistence type="inferred from homology"/>
<dbReference type="EC" id="3.6.1.-" evidence="1"/>
<dbReference type="EMBL" id="FM209186">
    <property type="protein sequence ID" value="CAW30092.1"/>
    <property type="molecule type" value="Genomic_DNA"/>
</dbReference>
<dbReference type="RefSeq" id="WP_003110323.1">
    <property type="nucleotide sequence ID" value="NC_011770.1"/>
</dbReference>
<dbReference type="SMR" id="B7V341"/>
<dbReference type="KEGG" id="pag:PLES_53381"/>
<dbReference type="HOGENOM" id="CLU_033617_2_0_6"/>
<dbReference type="GO" id="GO:0005737">
    <property type="term" value="C:cytoplasm"/>
    <property type="evidence" value="ECO:0007669"/>
    <property type="project" value="UniProtKB-SubCell"/>
</dbReference>
<dbReference type="GO" id="GO:0005525">
    <property type="term" value="F:GTP binding"/>
    <property type="evidence" value="ECO:0007669"/>
    <property type="project" value="UniProtKB-UniRule"/>
</dbReference>
<dbReference type="GO" id="GO:0003924">
    <property type="term" value="F:GTPase activity"/>
    <property type="evidence" value="ECO:0007669"/>
    <property type="project" value="UniProtKB-UniRule"/>
</dbReference>
<dbReference type="GO" id="GO:0046872">
    <property type="term" value="F:metal ion binding"/>
    <property type="evidence" value="ECO:0007669"/>
    <property type="project" value="UniProtKB-KW"/>
</dbReference>
<dbReference type="GO" id="GO:0019843">
    <property type="term" value="F:rRNA binding"/>
    <property type="evidence" value="ECO:0007669"/>
    <property type="project" value="UniProtKB-KW"/>
</dbReference>
<dbReference type="GO" id="GO:0042274">
    <property type="term" value="P:ribosomal small subunit biogenesis"/>
    <property type="evidence" value="ECO:0007669"/>
    <property type="project" value="UniProtKB-UniRule"/>
</dbReference>
<dbReference type="CDD" id="cd01854">
    <property type="entry name" value="YjeQ_EngC"/>
    <property type="match status" value="1"/>
</dbReference>
<dbReference type="Gene3D" id="2.40.50.140">
    <property type="entry name" value="Nucleic acid-binding proteins"/>
    <property type="match status" value="1"/>
</dbReference>
<dbReference type="Gene3D" id="3.40.50.300">
    <property type="entry name" value="P-loop containing nucleotide triphosphate hydrolases"/>
    <property type="match status" value="1"/>
</dbReference>
<dbReference type="Gene3D" id="1.10.40.50">
    <property type="entry name" value="Probable gtpase engc, domain 3"/>
    <property type="match status" value="1"/>
</dbReference>
<dbReference type="HAMAP" id="MF_01820">
    <property type="entry name" value="GTPase_RsgA"/>
    <property type="match status" value="1"/>
</dbReference>
<dbReference type="InterPro" id="IPR030378">
    <property type="entry name" value="G_CP_dom"/>
</dbReference>
<dbReference type="InterPro" id="IPR012340">
    <property type="entry name" value="NA-bd_OB-fold"/>
</dbReference>
<dbReference type="InterPro" id="IPR027417">
    <property type="entry name" value="P-loop_NTPase"/>
</dbReference>
<dbReference type="InterPro" id="IPR004881">
    <property type="entry name" value="Ribosome_biogen_GTPase_RsgA"/>
</dbReference>
<dbReference type="InterPro" id="IPR010914">
    <property type="entry name" value="RsgA_GTPase_dom"/>
</dbReference>
<dbReference type="NCBIfam" id="NF008931">
    <property type="entry name" value="PRK12288.1"/>
    <property type="match status" value="1"/>
</dbReference>
<dbReference type="NCBIfam" id="TIGR00157">
    <property type="entry name" value="ribosome small subunit-dependent GTPase A"/>
    <property type="match status" value="1"/>
</dbReference>
<dbReference type="PANTHER" id="PTHR32120">
    <property type="entry name" value="SMALL RIBOSOMAL SUBUNIT BIOGENESIS GTPASE RSGA"/>
    <property type="match status" value="1"/>
</dbReference>
<dbReference type="PANTHER" id="PTHR32120:SF11">
    <property type="entry name" value="SMALL RIBOSOMAL SUBUNIT BIOGENESIS GTPASE RSGA 1, MITOCHONDRIAL-RELATED"/>
    <property type="match status" value="1"/>
</dbReference>
<dbReference type="Pfam" id="PF03193">
    <property type="entry name" value="RsgA_GTPase"/>
    <property type="match status" value="1"/>
</dbReference>
<dbReference type="SUPFAM" id="SSF50249">
    <property type="entry name" value="Nucleic acid-binding proteins"/>
    <property type="match status" value="1"/>
</dbReference>
<dbReference type="SUPFAM" id="SSF52540">
    <property type="entry name" value="P-loop containing nucleoside triphosphate hydrolases"/>
    <property type="match status" value="1"/>
</dbReference>
<dbReference type="PROSITE" id="PS50936">
    <property type="entry name" value="ENGC_GTPASE"/>
    <property type="match status" value="1"/>
</dbReference>
<dbReference type="PROSITE" id="PS51721">
    <property type="entry name" value="G_CP"/>
    <property type="match status" value="1"/>
</dbReference>
<name>RSGA_PSEA8</name>
<gene>
    <name evidence="1" type="primary">rsgA</name>
    <name type="ordered locus">PLES_53381</name>
</gene>
<feature type="chain" id="PRO_1000188121" description="Small ribosomal subunit biogenesis GTPase RsgA">
    <location>
        <begin position="1"/>
        <end position="339"/>
    </location>
</feature>
<feature type="domain" description="CP-type G" evidence="2">
    <location>
        <begin position="111"/>
        <end position="271"/>
    </location>
</feature>
<feature type="binding site" evidence="1">
    <location>
        <begin position="159"/>
        <end position="162"/>
    </location>
    <ligand>
        <name>GTP</name>
        <dbReference type="ChEBI" id="CHEBI:37565"/>
    </ligand>
</feature>
<feature type="binding site" evidence="1">
    <location>
        <begin position="213"/>
        <end position="221"/>
    </location>
    <ligand>
        <name>GTP</name>
        <dbReference type="ChEBI" id="CHEBI:37565"/>
    </ligand>
</feature>
<feature type="binding site" evidence="1">
    <location>
        <position position="295"/>
    </location>
    <ligand>
        <name>Zn(2+)</name>
        <dbReference type="ChEBI" id="CHEBI:29105"/>
    </ligand>
</feature>
<feature type="binding site" evidence="1">
    <location>
        <position position="300"/>
    </location>
    <ligand>
        <name>Zn(2+)</name>
        <dbReference type="ChEBI" id="CHEBI:29105"/>
    </ligand>
</feature>
<feature type="binding site" evidence="1">
    <location>
        <position position="302"/>
    </location>
    <ligand>
        <name>Zn(2+)</name>
        <dbReference type="ChEBI" id="CHEBI:29105"/>
    </ligand>
</feature>
<feature type="binding site" evidence="1">
    <location>
        <position position="308"/>
    </location>
    <ligand>
        <name>Zn(2+)</name>
        <dbReference type="ChEBI" id="CHEBI:29105"/>
    </ligand>
</feature>
<keyword id="KW-0963">Cytoplasm</keyword>
<keyword id="KW-0342">GTP-binding</keyword>
<keyword id="KW-0378">Hydrolase</keyword>
<keyword id="KW-0479">Metal-binding</keyword>
<keyword id="KW-0547">Nucleotide-binding</keyword>
<keyword id="KW-0690">Ribosome biogenesis</keyword>
<keyword id="KW-0694">RNA-binding</keyword>
<keyword id="KW-0699">rRNA-binding</keyword>
<keyword id="KW-0862">Zinc</keyword>
<accession>B7V341</accession>
<reference key="1">
    <citation type="journal article" date="2009" name="Genome Res.">
        <title>Newly introduced genomic prophage islands are critical determinants of in vivo competitiveness in the Liverpool epidemic strain of Pseudomonas aeruginosa.</title>
        <authorList>
            <person name="Winstanley C."/>
            <person name="Langille M.G.I."/>
            <person name="Fothergill J.L."/>
            <person name="Kukavica-Ibrulj I."/>
            <person name="Paradis-Bleau C."/>
            <person name="Sanschagrin F."/>
            <person name="Thomson N.R."/>
            <person name="Winsor G.L."/>
            <person name="Quail M.A."/>
            <person name="Lennard N."/>
            <person name="Bignell A."/>
            <person name="Clarke L."/>
            <person name="Seeger K."/>
            <person name="Saunders D."/>
            <person name="Harris D."/>
            <person name="Parkhill J."/>
            <person name="Hancock R.E.W."/>
            <person name="Brinkman F.S.L."/>
            <person name="Levesque R.C."/>
        </authorList>
    </citation>
    <scope>NUCLEOTIDE SEQUENCE [LARGE SCALE GENOMIC DNA]</scope>
    <source>
        <strain>LESB58</strain>
    </source>
</reference>
<protein>
    <recommendedName>
        <fullName evidence="1">Small ribosomal subunit biogenesis GTPase RsgA</fullName>
        <ecNumber evidence="1">3.6.1.-</ecNumber>
    </recommendedName>
</protein>